<gene>
    <name type="primary">y16O</name>
    <name type="synonym">denB.-2</name>
    <name type="synonym">ndd.5</name>
</gene>
<keyword id="KW-1185">Reference proteome</keyword>
<sequence>MKILNSVLIACAWWVAQVSAVVVGIHIYYEYF</sequence>
<proteinExistence type="predicted"/>
<accession>P39247</accession>
<dbReference type="EMBL" id="AF158101">
    <property type="protein sequence ID" value="AAD42561.1"/>
    <property type="molecule type" value="Genomic_DNA"/>
</dbReference>
<dbReference type="RefSeq" id="NP_049885.1">
    <property type="nucleotide sequence ID" value="NC_000866.4"/>
</dbReference>
<dbReference type="GeneID" id="1258763"/>
<dbReference type="KEGG" id="vg:1258763"/>
<dbReference type="Proteomes" id="UP000009087">
    <property type="component" value="Segment"/>
</dbReference>
<reference key="1">
    <citation type="journal article" date="2003" name="Microbiol. Mol. Biol. Rev.">
        <title>Bacteriophage T4 genome.</title>
        <authorList>
            <person name="Miller E.S."/>
            <person name="Kutter E."/>
            <person name="Mosig G."/>
            <person name="Arisaka F."/>
            <person name="Kunisawa T."/>
            <person name="Ruger W."/>
        </authorList>
    </citation>
    <scope>NUCLEOTIDE SEQUENCE [LARGE SCALE GENOMIC DNA]</scope>
</reference>
<organism>
    <name type="scientific">Enterobacteria phage T4</name>
    <name type="common">Bacteriophage T4</name>
    <dbReference type="NCBI Taxonomy" id="10665"/>
    <lineage>
        <taxon>Viruses</taxon>
        <taxon>Duplodnaviria</taxon>
        <taxon>Heunggongvirae</taxon>
        <taxon>Uroviricota</taxon>
        <taxon>Caudoviricetes</taxon>
        <taxon>Straboviridae</taxon>
        <taxon>Tevenvirinae</taxon>
        <taxon>Tequatrovirus</taxon>
    </lineage>
</organism>
<feature type="chain" id="PRO_0000165211" description="Uncharacterized 3.7 kDa protein in ndd-denB intergenic region">
    <location>
        <begin position="1"/>
        <end position="32"/>
    </location>
</feature>
<name>Y16O_BPT4</name>
<organismHost>
    <name type="scientific">Escherichia coli</name>
    <dbReference type="NCBI Taxonomy" id="562"/>
</organismHost>
<protein>
    <recommendedName>
        <fullName>Uncharacterized 3.7 kDa protein in ndd-denB intergenic region</fullName>
    </recommendedName>
</protein>